<feature type="chain" id="PRO_0000228529" description="Ribonuclease 3">
    <location>
        <begin position="1"/>
        <end position="227"/>
    </location>
</feature>
<feature type="domain" description="RNase III" evidence="1">
    <location>
        <begin position="3"/>
        <end position="130"/>
    </location>
</feature>
<feature type="domain" description="DRBM" evidence="1">
    <location>
        <begin position="155"/>
        <end position="224"/>
    </location>
</feature>
<feature type="active site" evidence="1">
    <location>
        <position position="47"/>
    </location>
</feature>
<feature type="active site" evidence="1">
    <location>
        <position position="119"/>
    </location>
</feature>
<feature type="binding site" evidence="1">
    <location>
        <position position="43"/>
    </location>
    <ligand>
        <name>Mg(2+)</name>
        <dbReference type="ChEBI" id="CHEBI:18420"/>
    </ligand>
</feature>
<feature type="binding site" evidence="1">
    <location>
        <position position="116"/>
    </location>
    <ligand>
        <name>Mg(2+)</name>
        <dbReference type="ChEBI" id="CHEBI:18420"/>
    </ligand>
</feature>
<feature type="binding site" evidence="1">
    <location>
        <position position="119"/>
    </location>
    <ligand>
        <name>Mg(2+)</name>
        <dbReference type="ChEBI" id="CHEBI:18420"/>
    </ligand>
</feature>
<accession>Q5HA74</accession>
<accession>Q5FE00</accession>
<dbReference type="EC" id="3.1.26.3" evidence="1"/>
<dbReference type="EMBL" id="CR767821">
    <property type="protein sequence ID" value="CAH58541.1"/>
    <property type="molecule type" value="Genomic_DNA"/>
</dbReference>
<dbReference type="EMBL" id="CR925678">
    <property type="protein sequence ID" value="CAI27348.1"/>
    <property type="molecule type" value="Genomic_DNA"/>
</dbReference>
<dbReference type="RefSeq" id="WP_011155486.1">
    <property type="nucleotide sequence ID" value="NC_005295.2"/>
</dbReference>
<dbReference type="SMR" id="Q5HA74"/>
<dbReference type="GeneID" id="33057615"/>
<dbReference type="KEGG" id="eru:Erum8070"/>
<dbReference type="KEGG" id="erw:ERWE_CDS_08540"/>
<dbReference type="eggNOG" id="COG0571">
    <property type="taxonomic scope" value="Bacteria"/>
</dbReference>
<dbReference type="HOGENOM" id="CLU_000907_1_1_5"/>
<dbReference type="Proteomes" id="UP000001021">
    <property type="component" value="Chromosome"/>
</dbReference>
<dbReference type="GO" id="GO:0005737">
    <property type="term" value="C:cytoplasm"/>
    <property type="evidence" value="ECO:0007669"/>
    <property type="project" value="UniProtKB-SubCell"/>
</dbReference>
<dbReference type="GO" id="GO:0003725">
    <property type="term" value="F:double-stranded RNA binding"/>
    <property type="evidence" value="ECO:0007669"/>
    <property type="project" value="TreeGrafter"/>
</dbReference>
<dbReference type="GO" id="GO:0046872">
    <property type="term" value="F:metal ion binding"/>
    <property type="evidence" value="ECO:0007669"/>
    <property type="project" value="UniProtKB-KW"/>
</dbReference>
<dbReference type="GO" id="GO:0004525">
    <property type="term" value="F:ribonuclease III activity"/>
    <property type="evidence" value="ECO:0007669"/>
    <property type="project" value="UniProtKB-UniRule"/>
</dbReference>
<dbReference type="GO" id="GO:0019843">
    <property type="term" value="F:rRNA binding"/>
    <property type="evidence" value="ECO:0007669"/>
    <property type="project" value="UniProtKB-KW"/>
</dbReference>
<dbReference type="GO" id="GO:0006397">
    <property type="term" value="P:mRNA processing"/>
    <property type="evidence" value="ECO:0007669"/>
    <property type="project" value="UniProtKB-UniRule"/>
</dbReference>
<dbReference type="GO" id="GO:0010468">
    <property type="term" value="P:regulation of gene expression"/>
    <property type="evidence" value="ECO:0007669"/>
    <property type="project" value="TreeGrafter"/>
</dbReference>
<dbReference type="GO" id="GO:0006364">
    <property type="term" value="P:rRNA processing"/>
    <property type="evidence" value="ECO:0007669"/>
    <property type="project" value="UniProtKB-UniRule"/>
</dbReference>
<dbReference type="GO" id="GO:0008033">
    <property type="term" value="P:tRNA processing"/>
    <property type="evidence" value="ECO:0007669"/>
    <property type="project" value="UniProtKB-KW"/>
</dbReference>
<dbReference type="CDD" id="cd10845">
    <property type="entry name" value="DSRM_RNAse_III_family"/>
    <property type="match status" value="1"/>
</dbReference>
<dbReference type="CDD" id="cd00593">
    <property type="entry name" value="RIBOc"/>
    <property type="match status" value="1"/>
</dbReference>
<dbReference type="FunFam" id="1.10.1520.10:FF:000001">
    <property type="entry name" value="Ribonuclease 3"/>
    <property type="match status" value="1"/>
</dbReference>
<dbReference type="FunFam" id="3.30.160.20:FF:000003">
    <property type="entry name" value="Ribonuclease 3"/>
    <property type="match status" value="1"/>
</dbReference>
<dbReference type="Gene3D" id="3.30.160.20">
    <property type="match status" value="1"/>
</dbReference>
<dbReference type="Gene3D" id="1.10.1520.10">
    <property type="entry name" value="Ribonuclease III domain"/>
    <property type="match status" value="1"/>
</dbReference>
<dbReference type="HAMAP" id="MF_00104">
    <property type="entry name" value="RNase_III"/>
    <property type="match status" value="1"/>
</dbReference>
<dbReference type="InterPro" id="IPR014720">
    <property type="entry name" value="dsRBD_dom"/>
</dbReference>
<dbReference type="InterPro" id="IPR011907">
    <property type="entry name" value="RNase_III"/>
</dbReference>
<dbReference type="InterPro" id="IPR000999">
    <property type="entry name" value="RNase_III_dom"/>
</dbReference>
<dbReference type="InterPro" id="IPR036389">
    <property type="entry name" value="RNase_III_sf"/>
</dbReference>
<dbReference type="NCBIfam" id="TIGR02191">
    <property type="entry name" value="RNaseIII"/>
    <property type="match status" value="1"/>
</dbReference>
<dbReference type="PANTHER" id="PTHR11207:SF0">
    <property type="entry name" value="RIBONUCLEASE 3"/>
    <property type="match status" value="1"/>
</dbReference>
<dbReference type="PANTHER" id="PTHR11207">
    <property type="entry name" value="RIBONUCLEASE III"/>
    <property type="match status" value="1"/>
</dbReference>
<dbReference type="Pfam" id="PF00035">
    <property type="entry name" value="dsrm"/>
    <property type="match status" value="1"/>
</dbReference>
<dbReference type="Pfam" id="PF14622">
    <property type="entry name" value="Ribonucleas_3_3"/>
    <property type="match status" value="1"/>
</dbReference>
<dbReference type="SMART" id="SM00358">
    <property type="entry name" value="DSRM"/>
    <property type="match status" value="1"/>
</dbReference>
<dbReference type="SMART" id="SM00535">
    <property type="entry name" value="RIBOc"/>
    <property type="match status" value="1"/>
</dbReference>
<dbReference type="SUPFAM" id="SSF54768">
    <property type="entry name" value="dsRNA-binding domain-like"/>
    <property type="match status" value="1"/>
</dbReference>
<dbReference type="SUPFAM" id="SSF69065">
    <property type="entry name" value="RNase III domain-like"/>
    <property type="match status" value="1"/>
</dbReference>
<dbReference type="PROSITE" id="PS50137">
    <property type="entry name" value="DS_RBD"/>
    <property type="match status" value="1"/>
</dbReference>
<dbReference type="PROSITE" id="PS00517">
    <property type="entry name" value="RNASE_3_1"/>
    <property type="match status" value="1"/>
</dbReference>
<dbReference type="PROSITE" id="PS50142">
    <property type="entry name" value="RNASE_3_2"/>
    <property type="match status" value="1"/>
</dbReference>
<keyword id="KW-0963">Cytoplasm</keyword>
<keyword id="KW-0255">Endonuclease</keyword>
<keyword id="KW-0378">Hydrolase</keyword>
<keyword id="KW-0460">Magnesium</keyword>
<keyword id="KW-0479">Metal-binding</keyword>
<keyword id="KW-0507">mRNA processing</keyword>
<keyword id="KW-0540">Nuclease</keyword>
<keyword id="KW-0694">RNA-binding</keyword>
<keyword id="KW-0698">rRNA processing</keyword>
<keyword id="KW-0699">rRNA-binding</keyword>
<keyword id="KW-0819">tRNA processing</keyword>
<protein>
    <recommendedName>
        <fullName evidence="1">Ribonuclease 3</fullName>
        <ecNumber evidence="1">3.1.26.3</ecNumber>
    </recommendedName>
    <alternativeName>
        <fullName evidence="1">Ribonuclease III</fullName>
        <shortName evidence="1">RNase III</shortName>
    </alternativeName>
</protein>
<comment type="function">
    <text evidence="1">Digests double-stranded RNA. Involved in the processing of primary rRNA transcript to yield the immediate precursors to the large and small rRNAs (23S and 16S). Processes some mRNAs, and tRNAs when they are encoded in the rRNA operon. Processes pre-crRNA and tracrRNA of type II CRISPR loci if present in the organism.</text>
</comment>
<comment type="catalytic activity">
    <reaction evidence="1">
        <text>Endonucleolytic cleavage to 5'-phosphomonoester.</text>
        <dbReference type="EC" id="3.1.26.3"/>
    </reaction>
</comment>
<comment type="cofactor">
    <cofactor evidence="1">
        <name>Mg(2+)</name>
        <dbReference type="ChEBI" id="CHEBI:18420"/>
    </cofactor>
</comment>
<comment type="subunit">
    <text evidence="1">Homodimer.</text>
</comment>
<comment type="subcellular location">
    <subcellularLocation>
        <location evidence="1">Cytoplasm</location>
    </subcellularLocation>
</comment>
<comment type="similarity">
    <text evidence="1">Belongs to the ribonuclease III family.</text>
</comment>
<name>RNC_EHRRW</name>
<proteinExistence type="inferred from homology"/>
<reference key="1">
    <citation type="journal article" date="2005" name="Proc. Natl. Acad. Sci. U.S.A.">
        <title>The genome of the heartwater agent Ehrlichia ruminantium contains multiple tandem repeats of actively variable copy number.</title>
        <authorList>
            <person name="Collins N.E."/>
            <person name="Liebenberg J."/>
            <person name="de Villiers E.P."/>
            <person name="Brayton K.A."/>
            <person name="Louw E."/>
            <person name="Pretorius A."/>
            <person name="Faber F.E."/>
            <person name="van Heerden H."/>
            <person name="Josemans A."/>
            <person name="van Kleef M."/>
            <person name="Steyn H.C."/>
            <person name="van Strijp M.F."/>
            <person name="Zweygarth E."/>
            <person name="Jongejan F."/>
            <person name="Maillard J.C."/>
            <person name="Berthier D."/>
            <person name="Botha M."/>
            <person name="Joubert F."/>
            <person name="Corton C.H."/>
            <person name="Thomson N.R."/>
            <person name="Allsopp M.T."/>
            <person name="Allsopp B.A."/>
        </authorList>
    </citation>
    <scope>NUCLEOTIDE SEQUENCE [LARGE SCALE GENOMIC DNA]</scope>
    <source>
        <strain>Welgevonden</strain>
    </source>
</reference>
<reference key="2">
    <citation type="journal article" date="2006" name="J. Bacteriol.">
        <title>Comparative genomic analysis of three strains of Ehrlichia ruminantium reveals an active process of genome size plasticity.</title>
        <authorList>
            <person name="Frutos R."/>
            <person name="Viari A."/>
            <person name="Ferraz C."/>
            <person name="Morgat A."/>
            <person name="Eychenie S."/>
            <person name="Kandassamy Y."/>
            <person name="Chantal I."/>
            <person name="Bensaid A."/>
            <person name="Coissac E."/>
            <person name="Vachiery N."/>
            <person name="Demaille J."/>
            <person name="Martinez D."/>
        </authorList>
    </citation>
    <scope>NUCLEOTIDE SEQUENCE [LARGE SCALE GENOMIC DNA]</scope>
    <source>
        <strain>Welgevonden</strain>
    </source>
</reference>
<sequence>MITNAISKIIKYDFKNTQLLNEALTHPSVLSKDNNNFNYERLEFLGDAVLNLVISEMLFNIFPYDTEGNLAKKKTALVCGTKLVEIAQSINLGIFIIMSDGERSCGGANNSNNLENALEALIGAIYLDGGLKAAKDFIFLFWKNSATHMKVPPQDAKTILQEWAQSKGFPAPSYHIINKSGPDHNPCFTVEVRINSHETLHATGHNKKLAEQKAASLMLAKINYKIK</sequence>
<organism>
    <name type="scientific">Ehrlichia ruminantium (strain Welgevonden)</name>
    <dbReference type="NCBI Taxonomy" id="254945"/>
    <lineage>
        <taxon>Bacteria</taxon>
        <taxon>Pseudomonadati</taxon>
        <taxon>Pseudomonadota</taxon>
        <taxon>Alphaproteobacteria</taxon>
        <taxon>Rickettsiales</taxon>
        <taxon>Anaplasmataceae</taxon>
        <taxon>Ehrlichia</taxon>
    </lineage>
</organism>
<gene>
    <name evidence="1" type="primary">rnc</name>
    <name type="ordered locus">Erum8070</name>
    <name type="ordered locus">ERWE_CDS_08540</name>
</gene>
<evidence type="ECO:0000255" key="1">
    <source>
        <dbReference type="HAMAP-Rule" id="MF_00104"/>
    </source>
</evidence>